<sequence length="335" mass="36502">MATIHRPRRGSLAFSPRKRAKSQVPRTRYWAAGEEKARMDGFAGYKAGMTHIIMIDDKPNSLTEGMEISVPVTILETPPLSIAALRVYEKYNGGVRAAGEAWSDKLDPSLARSITVPKNKRGAAIDEIGAIIEDMEELRLIAHTNPKLLTGVPKKNPDLMEIQVNGGNIANQFELAKSLLGSSVPISSIFSPGSIIDVSAITKGKGVQGPVKRWGINLQKRKHSRGGKRRHIGNLGPWNPHHVRWTVPLLGQMGYHQRTEFNKRVLAIGSDGGAITPDGGFPGYGIIRGEYAILSGSVPGPSKRLVRMRSAVRAKDADLKTPQVLYVSRDSKQGL</sequence>
<accession>G7WMS7</accession>
<feature type="chain" id="PRO_0000422396" description="Large ribosomal subunit protein uL3">
    <location>
        <begin position="1"/>
        <end position="335"/>
    </location>
</feature>
<feature type="region of interest" description="Disordered" evidence="2">
    <location>
        <begin position="1"/>
        <end position="20"/>
    </location>
</feature>
<keyword id="KW-1185">Reference proteome</keyword>
<keyword id="KW-0687">Ribonucleoprotein</keyword>
<keyword id="KW-0689">Ribosomal protein</keyword>
<keyword id="KW-0694">RNA-binding</keyword>
<keyword id="KW-0699">rRNA-binding</keyword>
<organism>
    <name type="scientific">Methanothrix harundinacea (strain 6Ac)</name>
    <name type="common">Methanosaeta harundinacea</name>
    <dbReference type="NCBI Taxonomy" id="1110509"/>
    <lineage>
        <taxon>Archaea</taxon>
        <taxon>Methanobacteriati</taxon>
        <taxon>Methanobacteriota</taxon>
        <taxon>Stenosarchaea group</taxon>
        <taxon>Methanomicrobia</taxon>
        <taxon>Methanotrichales</taxon>
        <taxon>Methanotrichaceae</taxon>
        <taxon>Methanothrix</taxon>
    </lineage>
</organism>
<dbReference type="EMBL" id="CP003117">
    <property type="protein sequence ID" value="AET63861.1"/>
    <property type="status" value="ALT_INIT"/>
    <property type="molecule type" value="Genomic_DNA"/>
</dbReference>
<dbReference type="RefSeq" id="WP_048144279.1">
    <property type="nucleotide sequence ID" value="NC_017527.1"/>
</dbReference>
<dbReference type="SMR" id="G7WMS7"/>
<dbReference type="STRING" id="1110509.Mhar_0476"/>
<dbReference type="GeneID" id="12509645"/>
<dbReference type="KEGG" id="mhi:Mhar_0476"/>
<dbReference type="PATRIC" id="fig|1110509.7.peg.528"/>
<dbReference type="HOGENOM" id="CLU_033361_2_0_2"/>
<dbReference type="OrthoDB" id="6121at2157"/>
<dbReference type="Proteomes" id="UP000005877">
    <property type="component" value="Chromosome"/>
</dbReference>
<dbReference type="GO" id="GO:0022625">
    <property type="term" value="C:cytosolic large ribosomal subunit"/>
    <property type="evidence" value="ECO:0007669"/>
    <property type="project" value="TreeGrafter"/>
</dbReference>
<dbReference type="GO" id="GO:0019843">
    <property type="term" value="F:rRNA binding"/>
    <property type="evidence" value="ECO:0007669"/>
    <property type="project" value="UniProtKB-UniRule"/>
</dbReference>
<dbReference type="GO" id="GO:0003735">
    <property type="term" value="F:structural constituent of ribosome"/>
    <property type="evidence" value="ECO:0007669"/>
    <property type="project" value="InterPro"/>
</dbReference>
<dbReference type="GO" id="GO:0006412">
    <property type="term" value="P:translation"/>
    <property type="evidence" value="ECO:0007669"/>
    <property type="project" value="UniProtKB-UniRule"/>
</dbReference>
<dbReference type="Gene3D" id="3.30.1430.10">
    <property type="match status" value="1"/>
</dbReference>
<dbReference type="Gene3D" id="4.10.960.10">
    <property type="entry name" value="Ribosomal protein L3, domain 3"/>
    <property type="match status" value="1"/>
</dbReference>
<dbReference type="Gene3D" id="2.40.30.10">
    <property type="entry name" value="Translation factors"/>
    <property type="match status" value="1"/>
</dbReference>
<dbReference type="HAMAP" id="MF_01325_A">
    <property type="entry name" value="Ribosomal_uL3_A"/>
    <property type="match status" value="1"/>
</dbReference>
<dbReference type="InterPro" id="IPR045077">
    <property type="entry name" value="L3_arc_euk"/>
</dbReference>
<dbReference type="InterPro" id="IPR044892">
    <property type="entry name" value="Ribosomal_L3_dom_3_arc_sf"/>
</dbReference>
<dbReference type="InterPro" id="IPR000597">
    <property type="entry name" value="Ribosomal_uL3"/>
</dbReference>
<dbReference type="InterPro" id="IPR019928">
    <property type="entry name" value="Ribosomal_uL3_arc"/>
</dbReference>
<dbReference type="InterPro" id="IPR019926">
    <property type="entry name" value="Ribosomal_uL3_CS"/>
</dbReference>
<dbReference type="InterPro" id="IPR009000">
    <property type="entry name" value="Transl_B-barrel_sf"/>
</dbReference>
<dbReference type="NCBIfam" id="TIGR03626">
    <property type="entry name" value="L3_arch"/>
    <property type="match status" value="1"/>
</dbReference>
<dbReference type="NCBIfam" id="NF003261">
    <property type="entry name" value="PRK04231.1"/>
    <property type="match status" value="1"/>
</dbReference>
<dbReference type="PANTHER" id="PTHR11363">
    <property type="entry name" value="60S RIBOSOMAL PROTEIN L3-RELATED"/>
    <property type="match status" value="1"/>
</dbReference>
<dbReference type="PANTHER" id="PTHR11363:SF5">
    <property type="entry name" value="LARGE RIBOSOMAL SUBUNIT PROTEIN UL3"/>
    <property type="match status" value="1"/>
</dbReference>
<dbReference type="Pfam" id="PF00297">
    <property type="entry name" value="Ribosomal_L3"/>
    <property type="match status" value="1"/>
</dbReference>
<dbReference type="SUPFAM" id="SSF50447">
    <property type="entry name" value="Translation proteins"/>
    <property type="match status" value="1"/>
</dbReference>
<dbReference type="PROSITE" id="PS00474">
    <property type="entry name" value="RIBOSOMAL_L3"/>
    <property type="match status" value="1"/>
</dbReference>
<protein>
    <recommendedName>
        <fullName evidence="3">Large ribosomal subunit protein uL3</fullName>
    </recommendedName>
    <alternativeName>
        <fullName>50S ribosomal protein L3</fullName>
    </alternativeName>
</protein>
<comment type="function">
    <text evidence="1">One of the primary rRNA binding proteins, it binds directly near the 3'-end of the 23S rRNA, where it nucleates assembly of the 50S subunit.</text>
</comment>
<comment type="subunit">
    <text evidence="1">Part of the 50S ribosomal subunit. Forms a cluster with proteins L14 and L24e (By similarity).</text>
</comment>
<comment type="similarity">
    <text evidence="3">Belongs to the universal ribosomal protein uL3 family.</text>
</comment>
<comment type="sequence caution" evidence="3">
    <conflict type="erroneous initiation">
        <sequence resource="EMBL-CDS" id="AET63861"/>
    </conflict>
    <text>Truncated N-terminus.</text>
</comment>
<proteinExistence type="inferred from homology"/>
<reference key="1">
    <citation type="journal article" date="2012" name="PLoS ONE">
        <title>The genome characteristics and predicted function of methyl-group oxidation pathway in the obligate aceticlastic methanogens, Methanosaeta spp.</title>
        <authorList>
            <person name="Zhu J."/>
            <person name="Zheng H."/>
            <person name="Ai G."/>
            <person name="Zhang G."/>
            <person name="Liu D."/>
            <person name="Liu X."/>
            <person name="Dong X."/>
        </authorList>
    </citation>
    <scope>NUCLEOTIDE SEQUENCE [LARGE SCALE GENOMIC DNA]</scope>
    <source>
        <strain>6Ac</strain>
    </source>
</reference>
<gene>
    <name type="primary">rpl3</name>
    <name type="ordered locus">Mhar_0476</name>
</gene>
<name>RL3_METH6</name>
<evidence type="ECO:0000250" key="1"/>
<evidence type="ECO:0000256" key="2">
    <source>
        <dbReference type="SAM" id="MobiDB-lite"/>
    </source>
</evidence>
<evidence type="ECO:0000305" key="3"/>